<dbReference type="EMBL" id="AM286415">
    <property type="protein sequence ID" value="CAL13324.1"/>
    <property type="molecule type" value="Genomic_DNA"/>
</dbReference>
<dbReference type="RefSeq" id="WP_005173239.1">
    <property type="nucleotide sequence ID" value="NC_008800.1"/>
</dbReference>
<dbReference type="RefSeq" id="YP_001007468.1">
    <property type="nucleotide sequence ID" value="NC_008800.1"/>
</dbReference>
<dbReference type="SMR" id="A1JP93"/>
<dbReference type="KEGG" id="yen:YE3294"/>
<dbReference type="PATRIC" id="fig|393305.7.peg.3504"/>
<dbReference type="eggNOG" id="ENOG502ZCMR">
    <property type="taxonomic scope" value="Bacteria"/>
</dbReference>
<dbReference type="HOGENOM" id="CLU_121866_0_0_6"/>
<dbReference type="OrthoDB" id="5599437at2"/>
<dbReference type="Proteomes" id="UP000000642">
    <property type="component" value="Chromosome"/>
</dbReference>
<dbReference type="GO" id="GO:0009898">
    <property type="term" value="C:cytoplasmic side of plasma membrane"/>
    <property type="evidence" value="ECO:0007669"/>
    <property type="project" value="InterPro"/>
</dbReference>
<dbReference type="CDD" id="cd16323">
    <property type="entry name" value="Syd"/>
    <property type="match status" value="1"/>
</dbReference>
<dbReference type="Gene3D" id="3.40.1580.20">
    <property type="entry name" value="Syd protein"/>
    <property type="match status" value="1"/>
</dbReference>
<dbReference type="HAMAP" id="MF_01104">
    <property type="entry name" value="Syd"/>
    <property type="match status" value="1"/>
</dbReference>
<dbReference type="InterPro" id="IPR009948">
    <property type="entry name" value="Syd"/>
</dbReference>
<dbReference type="InterPro" id="IPR038228">
    <property type="entry name" value="Syd_sf"/>
</dbReference>
<dbReference type="NCBIfam" id="NF003439">
    <property type="entry name" value="PRK04968.1"/>
    <property type="match status" value="1"/>
</dbReference>
<dbReference type="Pfam" id="PF07348">
    <property type="entry name" value="Syd"/>
    <property type="match status" value="1"/>
</dbReference>
<reference key="1">
    <citation type="journal article" date="2006" name="PLoS Genet.">
        <title>The complete genome sequence and comparative genome analysis of the high pathogenicity Yersinia enterocolitica strain 8081.</title>
        <authorList>
            <person name="Thomson N.R."/>
            <person name="Howard S."/>
            <person name="Wren B.W."/>
            <person name="Holden M.T.G."/>
            <person name="Crossman L."/>
            <person name="Challis G.L."/>
            <person name="Churcher C."/>
            <person name="Mungall K."/>
            <person name="Brooks K."/>
            <person name="Chillingworth T."/>
            <person name="Feltwell T."/>
            <person name="Abdellah Z."/>
            <person name="Hauser H."/>
            <person name="Jagels K."/>
            <person name="Maddison M."/>
            <person name="Moule S."/>
            <person name="Sanders M."/>
            <person name="Whitehead S."/>
            <person name="Quail M.A."/>
            <person name="Dougan G."/>
            <person name="Parkhill J."/>
            <person name="Prentice M.B."/>
        </authorList>
    </citation>
    <scope>NUCLEOTIDE SEQUENCE [LARGE SCALE GENOMIC DNA]</scope>
    <source>
        <strain>NCTC 13174 / 8081</strain>
    </source>
</reference>
<organism>
    <name type="scientific">Yersinia enterocolitica serotype O:8 / biotype 1B (strain NCTC 13174 / 8081)</name>
    <dbReference type="NCBI Taxonomy" id="393305"/>
    <lineage>
        <taxon>Bacteria</taxon>
        <taxon>Pseudomonadati</taxon>
        <taxon>Pseudomonadota</taxon>
        <taxon>Gammaproteobacteria</taxon>
        <taxon>Enterobacterales</taxon>
        <taxon>Yersiniaceae</taxon>
        <taxon>Yersinia</taxon>
    </lineage>
</organism>
<proteinExistence type="inferred from homology"/>
<evidence type="ECO:0000255" key="1">
    <source>
        <dbReference type="HAMAP-Rule" id="MF_01104"/>
    </source>
</evidence>
<comment type="function">
    <text evidence="1">Interacts with the SecY protein in vivo. May bind preferentially to an uncomplexed state of SecY, thus functioning either as a chelating agent for excess SecY in the cell or as a regulatory factor that negatively controls the translocase function.</text>
</comment>
<comment type="subcellular location">
    <subcellularLocation>
        <location evidence="1">Cell inner membrane</location>
        <topology evidence="1">Peripheral membrane protein</topology>
        <orientation evidence="1">Cytoplasmic side</orientation>
    </subcellularLocation>
    <text evidence="1">Loosely associated with the cytoplasmic side of the inner membrane, probably via SecY.</text>
</comment>
<comment type="similarity">
    <text evidence="1">Belongs to the Syd family.</text>
</comment>
<gene>
    <name evidence="1" type="primary">syd</name>
    <name type="ordered locus">YE3294</name>
</gene>
<feature type="chain" id="PRO_0000298269" description="Protein Syd">
    <location>
        <begin position="1"/>
        <end position="183"/>
    </location>
</feature>
<protein>
    <recommendedName>
        <fullName evidence="1">Protein Syd</fullName>
    </recommendedName>
</protein>
<accession>A1JP93</accession>
<name>SYDP_YERE8</name>
<sequence>MDQNVSTALKSFTQRYIDLWQQQTGRPPASEELYGVPSPCNIETQDNQVFWLPQPFVGEANLANVERALEIQLHPDIHEFYTQQYAGDMKADLGDHRFTLLQVWSEDDFIRLQENLIGHLVTQKRLKLSPTLFLATTESEMTMASLCNVSGNMVLEEFGSGKRTLLASTLAHFLDALRPVFPE</sequence>
<keyword id="KW-0997">Cell inner membrane</keyword>
<keyword id="KW-1003">Cell membrane</keyword>
<keyword id="KW-0472">Membrane</keyword>